<evidence type="ECO:0000255" key="1">
    <source>
        <dbReference type="HAMAP-Rule" id="MF_00528"/>
    </source>
</evidence>
<organism>
    <name type="scientific">Clostridium kluyveri (strain NBRC 12016)</name>
    <dbReference type="NCBI Taxonomy" id="583346"/>
    <lineage>
        <taxon>Bacteria</taxon>
        <taxon>Bacillati</taxon>
        <taxon>Bacillota</taxon>
        <taxon>Clostridia</taxon>
        <taxon>Eubacteriales</taxon>
        <taxon>Clostridiaceae</taxon>
        <taxon>Clostridium</taxon>
    </lineage>
</organism>
<accession>B9E003</accession>
<dbReference type="EC" id="3.6.1.9" evidence="1"/>
<dbReference type="EMBL" id="AP009049">
    <property type="protein sequence ID" value="BAH05828.1"/>
    <property type="molecule type" value="Genomic_DNA"/>
</dbReference>
<dbReference type="RefSeq" id="WP_012101242.1">
    <property type="nucleotide sequence ID" value="NC_011837.1"/>
</dbReference>
<dbReference type="SMR" id="B9E003"/>
<dbReference type="KEGG" id="ckr:CKR_0777"/>
<dbReference type="HOGENOM" id="CLU_040416_0_0_9"/>
<dbReference type="Proteomes" id="UP000007969">
    <property type="component" value="Chromosome"/>
</dbReference>
<dbReference type="GO" id="GO:0005737">
    <property type="term" value="C:cytoplasm"/>
    <property type="evidence" value="ECO:0007669"/>
    <property type="project" value="UniProtKB-SubCell"/>
</dbReference>
<dbReference type="GO" id="GO:0036218">
    <property type="term" value="F:dTTP diphosphatase activity"/>
    <property type="evidence" value="ECO:0007669"/>
    <property type="project" value="RHEA"/>
</dbReference>
<dbReference type="GO" id="GO:0036221">
    <property type="term" value="F:UTP diphosphatase activity"/>
    <property type="evidence" value="ECO:0007669"/>
    <property type="project" value="RHEA"/>
</dbReference>
<dbReference type="GO" id="GO:0009117">
    <property type="term" value="P:nucleotide metabolic process"/>
    <property type="evidence" value="ECO:0007669"/>
    <property type="project" value="UniProtKB-KW"/>
</dbReference>
<dbReference type="CDD" id="cd00555">
    <property type="entry name" value="Maf"/>
    <property type="match status" value="1"/>
</dbReference>
<dbReference type="Gene3D" id="3.90.950.10">
    <property type="match status" value="1"/>
</dbReference>
<dbReference type="HAMAP" id="MF_00528">
    <property type="entry name" value="Maf"/>
    <property type="match status" value="1"/>
</dbReference>
<dbReference type="InterPro" id="IPR029001">
    <property type="entry name" value="ITPase-like_fam"/>
</dbReference>
<dbReference type="InterPro" id="IPR003697">
    <property type="entry name" value="Maf-like"/>
</dbReference>
<dbReference type="NCBIfam" id="TIGR00172">
    <property type="entry name" value="maf"/>
    <property type="match status" value="1"/>
</dbReference>
<dbReference type="NCBIfam" id="NF000867">
    <property type="entry name" value="PRK00078.1"/>
    <property type="match status" value="1"/>
</dbReference>
<dbReference type="PANTHER" id="PTHR43213">
    <property type="entry name" value="BIFUNCTIONAL DTTP/UTP PYROPHOSPHATASE/METHYLTRANSFERASE PROTEIN-RELATED"/>
    <property type="match status" value="1"/>
</dbReference>
<dbReference type="PANTHER" id="PTHR43213:SF5">
    <property type="entry name" value="BIFUNCTIONAL DTTP_UTP PYROPHOSPHATASE_METHYLTRANSFERASE PROTEIN-RELATED"/>
    <property type="match status" value="1"/>
</dbReference>
<dbReference type="Pfam" id="PF02545">
    <property type="entry name" value="Maf"/>
    <property type="match status" value="1"/>
</dbReference>
<dbReference type="PIRSF" id="PIRSF006305">
    <property type="entry name" value="Maf"/>
    <property type="match status" value="1"/>
</dbReference>
<dbReference type="SUPFAM" id="SSF52972">
    <property type="entry name" value="ITPase-like"/>
    <property type="match status" value="1"/>
</dbReference>
<reference key="1">
    <citation type="submission" date="2005-09" db="EMBL/GenBank/DDBJ databases">
        <title>Complete genome sequence of Clostridium kluyveri and comparative genomics of Clostridia species.</title>
        <authorList>
            <person name="Inui M."/>
            <person name="Nonaka H."/>
            <person name="Shinoda Y."/>
            <person name="Ikenaga Y."/>
            <person name="Abe M."/>
            <person name="Naito K."/>
            <person name="Vertes A.A."/>
            <person name="Yukawa H."/>
        </authorList>
    </citation>
    <scope>NUCLEOTIDE SEQUENCE [LARGE SCALE GENOMIC DNA]</scope>
    <source>
        <strain>NBRC 12016</strain>
    </source>
</reference>
<protein>
    <recommendedName>
        <fullName evidence="1">dTTP/UTP pyrophosphatase</fullName>
        <shortName evidence="1">dTTPase/UTPase</shortName>
        <ecNumber evidence="1">3.6.1.9</ecNumber>
    </recommendedName>
    <alternativeName>
        <fullName evidence="1">Nucleoside triphosphate pyrophosphatase</fullName>
    </alternativeName>
    <alternativeName>
        <fullName evidence="1">Nucleotide pyrophosphatase</fullName>
        <shortName evidence="1">Nucleotide PPase</shortName>
    </alternativeName>
</protein>
<keyword id="KW-0963">Cytoplasm</keyword>
<keyword id="KW-0378">Hydrolase</keyword>
<keyword id="KW-0546">Nucleotide metabolism</keyword>
<gene>
    <name type="ordered locus">CKR_0777</name>
</gene>
<feature type="chain" id="PRO_1000146286" description="dTTP/UTP pyrophosphatase">
    <location>
        <begin position="1"/>
        <end position="192"/>
    </location>
</feature>
<feature type="active site" description="Proton acceptor" evidence="1">
    <location>
        <position position="71"/>
    </location>
</feature>
<feature type="site" description="Important for substrate specificity" evidence="1">
    <location>
        <position position="11"/>
    </location>
</feature>
<feature type="site" description="Important for substrate specificity" evidence="1">
    <location>
        <position position="72"/>
    </location>
</feature>
<feature type="site" description="Important for substrate specificity" evidence="1">
    <location>
        <position position="156"/>
    </location>
</feature>
<sequence length="192" mass="21491">MKIVLASASSRRRQLLSRLIENFQVVVSDFDEDSVVFQGRCESYVMKLAEGKAKDVCRKLTNESSIVIGCDTAVFLRGKVMGKPRDIQEAFHMLKALSGNEHDVYSGIAIMDKVLHKTVKSFVRTTVKFSEIDDRCIKNYLKKGEYKDKAGAYGIQGYGGVFVKEIHGCYYNVVGLPLNKLYNMLSGMGVNL</sequence>
<comment type="function">
    <text evidence="1">Nucleoside triphosphate pyrophosphatase that hydrolyzes dTTP and UTP. May have a dual role in cell division arrest and in preventing the incorporation of modified nucleotides into cellular nucleic acids.</text>
</comment>
<comment type="catalytic activity">
    <reaction evidence="1">
        <text>dTTP + H2O = dTMP + diphosphate + H(+)</text>
        <dbReference type="Rhea" id="RHEA:28534"/>
        <dbReference type="ChEBI" id="CHEBI:15377"/>
        <dbReference type="ChEBI" id="CHEBI:15378"/>
        <dbReference type="ChEBI" id="CHEBI:33019"/>
        <dbReference type="ChEBI" id="CHEBI:37568"/>
        <dbReference type="ChEBI" id="CHEBI:63528"/>
        <dbReference type="EC" id="3.6.1.9"/>
    </reaction>
</comment>
<comment type="catalytic activity">
    <reaction evidence="1">
        <text>UTP + H2O = UMP + diphosphate + H(+)</text>
        <dbReference type="Rhea" id="RHEA:29395"/>
        <dbReference type="ChEBI" id="CHEBI:15377"/>
        <dbReference type="ChEBI" id="CHEBI:15378"/>
        <dbReference type="ChEBI" id="CHEBI:33019"/>
        <dbReference type="ChEBI" id="CHEBI:46398"/>
        <dbReference type="ChEBI" id="CHEBI:57865"/>
        <dbReference type="EC" id="3.6.1.9"/>
    </reaction>
</comment>
<comment type="cofactor">
    <cofactor evidence="1">
        <name>a divalent metal cation</name>
        <dbReference type="ChEBI" id="CHEBI:60240"/>
    </cofactor>
</comment>
<comment type="subcellular location">
    <subcellularLocation>
        <location evidence="1">Cytoplasm</location>
    </subcellularLocation>
</comment>
<comment type="similarity">
    <text evidence="1">Belongs to the Maf family. YhdE subfamily.</text>
</comment>
<name>NTPPA_CLOK1</name>
<proteinExistence type="inferred from homology"/>